<keyword id="KW-0002">3D-structure</keyword>
<keyword id="KW-0963">Cytoplasm</keyword>
<keyword id="KW-1185">Reference proteome</keyword>
<organism evidence="6">
    <name type="scientific">Caenorhabditis elegans</name>
    <dbReference type="NCBI Taxonomy" id="6239"/>
    <lineage>
        <taxon>Eukaryota</taxon>
        <taxon>Metazoa</taxon>
        <taxon>Ecdysozoa</taxon>
        <taxon>Nematoda</taxon>
        <taxon>Chromadorea</taxon>
        <taxon>Rhabditida</taxon>
        <taxon>Rhabditina</taxon>
        <taxon>Rhabditomorpha</taxon>
        <taxon>Rhabditoidea</taxon>
        <taxon>Rhabditidae</taxon>
        <taxon>Peloderinae</taxon>
        <taxon>Caenorhabditis</taxon>
    </lineage>
</organism>
<name>SLFL1_CAEEL</name>
<comment type="function">
    <text evidence="3">Component of the trimeric PUCH (precursor of 21U RNA 5'-end cleavage holoenzyme) complex, that acts as an endoribonuclease processing the 5'-end of precursor Piwi-interacting RNAs (piRNAs) (PubMed:37758951). The PUCH complex consists of tofu-1, tofu-2 and either slfl-3 or slfl-4, with tofu-2 exhibiting endoribonuclease activity (PubMed:37758951). PUCH-mediated processing strictly requires a 7-methyl-G cap (m7 G-cap) and an uracil at position three (U3) (PubMed:37758951). PUCH also exhibits a strict bias for piRNA precursors with an A or G at position 1 (PubMed:37758951). Mature piRNA production is enhanced by the interaction of PUCH with the PETISCO complex, which is stabilizing piRNA precursors and allows their processing by PUCH (PubMed:37758951).</text>
</comment>
<comment type="subunit">
    <text evidence="3">Component of the trimeric PUCH (precursor of 21U RNA 5'-end cleavage holoenzyme) complex; consisting of tofu-1, tofu-2 and either slfl-3 or slfl-4; which is required for processing of piRNA precursors (PubMed:37758951). Within the complex, interacts (via N-terminus) with tofu-2 (via N-terminus); the interaction stabilizes tofu-2 and may form a functional nuclease (PubMed:37758951). Within the complex, required for the interaction of tofu-2 (via N-terminus) with slfl-3 (via N-terminus) (PubMed:37758951). Interacts (via residues 82-172) with the PETISCO complex subunit tofu-6 (via residues 120-314); the interaction between the PETISCO and PUCH complex members enhances piRNA production in vivo (PubMed:37758951).</text>
</comment>
<comment type="subcellular location">
    <subcellularLocation>
        <location evidence="2">Cytoplasm</location>
    </subcellularLocation>
</comment>
<comment type="tissue specificity">
    <text evidence="2">Expressed in the germline.</text>
</comment>
<comment type="domain">
    <text evidence="4">In mammalian Schlafen proteins, two SLFN-folds come together to form the nuclease domain. In tofu-1 and tofu-2, only one SLFN-like fold can be identified, suggesting that the two proteins may interact via their SLFN-like folds to form a functional nuclease.</text>
</comment>
<comment type="similarity">
    <text evidence="5">Belongs to the Schlafen family.</text>
</comment>
<evidence type="ECO:0000256" key="1">
    <source>
        <dbReference type="SAM" id="MobiDB-lite"/>
    </source>
</evidence>
<evidence type="ECO:0000269" key="2">
    <source>
    </source>
</evidence>
<evidence type="ECO:0000269" key="3">
    <source>
    </source>
</evidence>
<evidence type="ECO:0000303" key="4">
    <source>
    </source>
</evidence>
<evidence type="ECO:0000305" key="5"/>
<evidence type="ECO:0000312" key="6">
    <source>
        <dbReference type="Proteomes" id="UP000001940"/>
    </source>
</evidence>
<evidence type="ECO:0000312" key="7">
    <source>
        <dbReference type="WormBase" id="C27H6.3"/>
    </source>
</evidence>
<evidence type="ECO:0007744" key="8">
    <source>
        <dbReference type="PDB" id="9G6Z"/>
    </source>
</evidence>
<evidence type="ECO:0007829" key="9">
    <source>
        <dbReference type="PDB" id="9G6Z"/>
    </source>
</evidence>
<accession>O17608</accession>
<proteinExistence type="evidence at protein level"/>
<sequence>MAALFEENDSYSDSENEEDFSGFLSEIEENENEDEFENDDEFEDDDELENVDELEDDELSSEEVDIPSENEVIVELHDGQAEVEESLLDALLGKALAGDQMNSRIEGLFEDLDSSVEPDIIDRSELEDVDSGISVGAVSSSSAETQASDAKCKNKDAFDMSSLKKYMQYITEEEHAVSVEDIPDFASKKNVYGTSFNVRNGIMSRPPRFEFARHDQRWIDSCVSMAYEKDKTLKELITLGKLTTTVKAGAKIEFRTKFTDVHIRSADEINLMETHDIQQIIRDALNSKRLAVVLFGIGKDGKVTGCHMGPGQQDNLRLALDTAVQTEFAPPIENILDVVDMNFVPVEEMDETFLIVIRVKQLRNQVYRLESSV</sequence>
<protein>
    <recommendedName>
        <fullName evidence="4">Schlafen-like protein 1</fullName>
        <shortName evidence="4">SLFL-1</shortName>
        <shortName evidence="4">SLFN-like 1</shortName>
    </recommendedName>
    <alternativeName>
        <fullName evidence="7">21U-RNA biogenesis fouled up protein 1</fullName>
    </alternativeName>
    <alternativeName>
        <fullName evidence="5">PUCH complex member slfl-1</fullName>
    </alternativeName>
    <alternativeName>
        <fullName evidence="5">Protein tofu-1</fullName>
    </alternativeName>
</protein>
<dbReference type="EMBL" id="BX284605">
    <property type="protein sequence ID" value="CAB02794.3"/>
    <property type="molecule type" value="Genomic_DNA"/>
</dbReference>
<dbReference type="RefSeq" id="NP_505568.3">
    <property type="nucleotide sequence ID" value="NM_073167.6"/>
</dbReference>
<dbReference type="PDB" id="9G6Z">
    <property type="method" value="X-ray"/>
    <property type="resolution" value="2.22 A"/>
    <property type="chains" value="B=85-96"/>
</dbReference>
<dbReference type="PDBsum" id="9G6Z"/>
<dbReference type="SMR" id="O17608"/>
<dbReference type="ComplexPortal" id="CPX-8565">
    <property type="entry name" value="PUCH ribonuclease complex, slfl-3 variant"/>
</dbReference>
<dbReference type="ComplexPortal" id="CPX-8569">
    <property type="entry name" value="PUCH ribonuclease complex, slfl-4 variant"/>
</dbReference>
<dbReference type="DIP" id="DIP-26422N"/>
<dbReference type="FunCoup" id="O17608">
    <property type="interactions" value="1614"/>
</dbReference>
<dbReference type="IntAct" id="O17608">
    <property type="interactions" value="3"/>
</dbReference>
<dbReference type="STRING" id="6239.C27H6.3.1"/>
<dbReference type="PaxDb" id="6239-C27H6.3"/>
<dbReference type="EnsemblMetazoa" id="C27H6.3.1">
    <property type="protein sequence ID" value="C27H6.3.1"/>
    <property type="gene ID" value="WBGene00007785"/>
</dbReference>
<dbReference type="GeneID" id="179389"/>
<dbReference type="KEGG" id="cel:CELE_C27H6.3"/>
<dbReference type="UCSC" id="C27H6.3">
    <property type="organism name" value="c. elegans"/>
</dbReference>
<dbReference type="AGR" id="WB:WBGene00007785"/>
<dbReference type="CTD" id="179389"/>
<dbReference type="WormBase" id="C27H6.3">
    <property type="protein sequence ID" value="CE41983"/>
    <property type="gene ID" value="WBGene00007785"/>
    <property type="gene designation" value="tofu-1"/>
</dbReference>
<dbReference type="eggNOG" id="ENOG502QVKE">
    <property type="taxonomic scope" value="Eukaryota"/>
</dbReference>
<dbReference type="HOGENOM" id="CLU_781285_0_0_1"/>
<dbReference type="InParanoid" id="O17608"/>
<dbReference type="OMA" id="RWIDSCK"/>
<dbReference type="OrthoDB" id="5819137at2759"/>
<dbReference type="PRO" id="PR:O17608"/>
<dbReference type="Proteomes" id="UP000001940">
    <property type="component" value="Chromosome V"/>
</dbReference>
<dbReference type="Bgee" id="WBGene00007785">
    <property type="expression patterns" value="Expressed in adult organism and 3 other cell types or tissues"/>
</dbReference>
<dbReference type="GO" id="GO:0005737">
    <property type="term" value="C:cytoplasm"/>
    <property type="evidence" value="ECO:0000314"/>
    <property type="project" value="UniProtKB"/>
</dbReference>
<dbReference type="GO" id="GO:1902555">
    <property type="term" value="C:endoribonuclease complex"/>
    <property type="evidence" value="ECO:0000314"/>
    <property type="project" value="UniProtKB"/>
</dbReference>
<dbReference type="GO" id="GO:0140990">
    <property type="term" value="P:primary piRNA processing"/>
    <property type="evidence" value="ECO:0000314"/>
    <property type="project" value="UniProtKB"/>
</dbReference>
<reference evidence="6" key="1">
    <citation type="journal article" date="1998" name="Science">
        <title>Genome sequence of the nematode C. elegans: a platform for investigating biology.</title>
        <authorList>
            <consortium name="The C. elegans sequencing consortium"/>
        </authorList>
    </citation>
    <scope>NUCLEOTIDE SEQUENCE [LARGE SCALE GENOMIC DNA]</scope>
    <source>
        <strain evidence="6">Bristol N2</strain>
    </source>
</reference>
<reference evidence="5" key="2">
    <citation type="journal article" date="2019" name="Cell Rep.">
        <title>Functional Proteomics Identifies a PICS Complex Required for piRNA Maturation and Chromosome Segregation.</title>
        <authorList>
            <person name="Zeng C."/>
            <person name="Weng C."/>
            <person name="Wang X."/>
            <person name="Yan Y.H."/>
            <person name="Li W.J."/>
            <person name="Xu D."/>
            <person name="Hong M."/>
            <person name="Liao S."/>
            <person name="Dong M.Q."/>
            <person name="Feng X."/>
            <person name="Xu C."/>
            <person name="Guang S."/>
        </authorList>
    </citation>
    <scope>SUBCELLULAR LOCATION</scope>
    <scope>TISSUE SPECIFICITY</scope>
</reference>
<reference evidence="8" key="3">
    <citation type="journal article" date="2023" name="Nature">
        <title>piRNA processing by a trimeric Schlafen-domain nuclease.</title>
        <authorList>
            <person name="Podvalnaya N."/>
            <person name="Bronkhorst A.W."/>
            <person name="Lichtenberger R."/>
            <person name="Hellmann S."/>
            <person name="Nischwitz E."/>
            <person name="Falk T."/>
            <person name="Karaulanov E."/>
            <person name="Butter F."/>
            <person name="Falk S."/>
            <person name="Ketting R.F."/>
        </authorList>
    </citation>
    <scope>X-RAY CRYSTALLOGRAPHY (2.22 ANGSTROMS) OF 85-96</scope>
    <scope>FUNCTION</scope>
    <scope>IDENTIFICATION IN THE PUCH COMPLEX</scope>
    <scope>INTERACTION WITH TOFU-2 AND TOFU-6</scope>
    <scope>DOMAIN</scope>
    <scope>IDENTIFICATION BY MASS SPECTROMETRY</scope>
</reference>
<reference key="4">
    <citation type="journal article" date="2024" name="Nature">
        <authorList>
            <person name="Podvalnaya N."/>
            <person name="Bronkhorst A.W."/>
            <person name="Lichtenberger R."/>
            <person name="Hellmann S."/>
            <person name="Nischwitz E."/>
            <person name="Falk T."/>
            <person name="Karaulanov E."/>
            <person name="Butter F."/>
            <person name="Falk S."/>
            <person name="Ketting R.F."/>
        </authorList>
    </citation>
    <scope>ERRATUM OF PUBMED:37758951</scope>
</reference>
<feature type="chain" id="PRO_0000452467" description="Schlafen-like protein 1">
    <location>
        <begin position="1"/>
        <end position="373"/>
    </location>
</feature>
<feature type="region of interest" description="Disordered" evidence="1">
    <location>
        <begin position="1"/>
        <end position="67"/>
    </location>
</feature>
<feature type="region of interest" description="SLFN-like fold" evidence="4">
    <location>
        <begin position="247"/>
        <end position="373"/>
    </location>
</feature>
<feature type="helix" evidence="9">
    <location>
        <begin position="87"/>
        <end position="95"/>
    </location>
</feature>
<gene>
    <name evidence="7" type="primary">tofu-1</name>
    <name evidence="7" type="ORF">C27H6.3</name>
</gene>